<comment type="sequence caution" evidence="2">
    <conflict type="erroneous initiation">
        <sequence resource="EMBL-CDS" id="AAB03669"/>
    </conflict>
</comment>
<accession>Q23921</accession>
<accession>Q54HI7</accession>
<accession>Q9NL64</accession>
<organism>
    <name type="scientific">Dictyostelium discoideum</name>
    <name type="common">Social amoeba</name>
    <dbReference type="NCBI Taxonomy" id="44689"/>
    <lineage>
        <taxon>Eukaryota</taxon>
        <taxon>Amoebozoa</taxon>
        <taxon>Evosea</taxon>
        <taxon>Eumycetozoa</taxon>
        <taxon>Dictyostelia</taxon>
        <taxon>Dictyosteliales</taxon>
        <taxon>Dictyosteliaceae</taxon>
        <taxon>Dictyostelium</taxon>
    </lineage>
</organism>
<keyword id="KW-1185">Reference proteome</keyword>
<feature type="chain" id="PRO_0000109805" description="Protein pkiA">
    <location>
        <begin position="1"/>
        <end position="127"/>
    </location>
</feature>
<feature type="domain" description="HIT" evidence="1">
    <location>
        <begin position="16"/>
        <end position="127"/>
    </location>
</feature>
<feature type="sequence conflict" description="In Ref. 2; AAB03669." evidence="2" ref="2">
    <original>LGGRQMNWPPG</original>
    <variation>PWW</variation>
    <location>
        <begin position="117"/>
        <end position="127"/>
    </location>
</feature>
<dbReference type="EMBL" id="AB029922">
    <property type="protein sequence ID" value="BAA89663.1"/>
    <property type="molecule type" value="mRNA"/>
</dbReference>
<dbReference type="EMBL" id="U61986">
    <property type="protein sequence ID" value="AAB03669.1"/>
    <property type="status" value="ALT_INIT"/>
    <property type="molecule type" value="mRNA"/>
</dbReference>
<dbReference type="EMBL" id="AAFI02000140">
    <property type="protein sequence ID" value="EAL62723.1"/>
    <property type="molecule type" value="Genomic_DNA"/>
</dbReference>
<dbReference type="RefSeq" id="XP_636246.1">
    <property type="nucleotide sequence ID" value="XM_631154.1"/>
</dbReference>
<dbReference type="SMR" id="Q23921"/>
<dbReference type="FunCoup" id="Q23921">
    <property type="interactions" value="544"/>
</dbReference>
<dbReference type="IntAct" id="Q23921">
    <property type="interactions" value="1"/>
</dbReference>
<dbReference type="STRING" id="44689.Q23921"/>
<dbReference type="PaxDb" id="44689-DDB0216234"/>
<dbReference type="EnsemblProtists" id="EAL62723">
    <property type="protein sequence ID" value="EAL62723"/>
    <property type="gene ID" value="DDB_G0289391"/>
</dbReference>
<dbReference type="GeneID" id="8627136"/>
<dbReference type="KEGG" id="ddi:DDB_G0289391"/>
<dbReference type="dictyBase" id="DDB_G0289391">
    <property type="gene designation" value="pkiA"/>
</dbReference>
<dbReference type="VEuPathDB" id="AmoebaDB:DDB_G0289391"/>
<dbReference type="eggNOG" id="KOG3275">
    <property type="taxonomic scope" value="Eukaryota"/>
</dbReference>
<dbReference type="HOGENOM" id="CLU_056776_8_1_1"/>
<dbReference type="InParanoid" id="Q23921"/>
<dbReference type="OMA" id="NGVEACQ"/>
<dbReference type="PhylomeDB" id="Q23921"/>
<dbReference type="PRO" id="PR:Q23921"/>
<dbReference type="Proteomes" id="UP000002195">
    <property type="component" value="Chromosome 5"/>
</dbReference>
<dbReference type="GO" id="GO:0005737">
    <property type="term" value="C:cytoplasm"/>
    <property type="evidence" value="ECO:0000318"/>
    <property type="project" value="GO_Central"/>
</dbReference>
<dbReference type="GO" id="GO:0031012">
    <property type="term" value="C:extracellular matrix"/>
    <property type="evidence" value="ECO:0007005"/>
    <property type="project" value="dictyBase"/>
</dbReference>
<dbReference type="GO" id="GO:0045335">
    <property type="term" value="C:phagocytic vesicle"/>
    <property type="evidence" value="ECO:0007005"/>
    <property type="project" value="dictyBase"/>
</dbReference>
<dbReference type="GO" id="GO:0016787">
    <property type="term" value="F:hydrolase activity"/>
    <property type="evidence" value="ECO:0000318"/>
    <property type="project" value="GO_Central"/>
</dbReference>
<dbReference type="GO" id="GO:0009617">
    <property type="term" value="P:response to bacterium"/>
    <property type="evidence" value="ECO:0007007"/>
    <property type="project" value="dictyBase"/>
</dbReference>
<dbReference type="CDD" id="cd01276">
    <property type="entry name" value="PKCI_related"/>
    <property type="match status" value="1"/>
</dbReference>
<dbReference type="FunFam" id="3.30.428.10:FF:000005">
    <property type="entry name" value="Histidine triad nucleotide-binding protein 1"/>
    <property type="match status" value="1"/>
</dbReference>
<dbReference type="Gene3D" id="3.30.428.10">
    <property type="entry name" value="HIT-like"/>
    <property type="match status" value="1"/>
</dbReference>
<dbReference type="InterPro" id="IPR019808">
    <property type="entry name" value="Histidine_triad_CS"/>
</dbReference>
<dbReference type="InterPro" id="IPR001310">
    <property type="entry name" value="Histidine_triad_HIT"/>
</dbReference>
<dbReference type="InterPro" id="IPR011146">
    <property type="entry name" value="HIT-like"/>
</dbReference>
<dbReference type="InterPro" id="IPR036265">
    <property type="entry name" value="HIT-like_sf"/>
</dbReference>
<dbReference type="PANTHER" id="PTHR23089">
    <property type="entry name" value="HISTIDINE TRIAD HIT PROTEIN"/>
    <property type="match status" value="1"/>
</dbReference>
<dbReference type="Pfam" id="PF01230">
    <property type="entry name" value="HIT"/>
    <property type="match status" value="1"/>
</dbReference>
<dbReference type="PRINTS" id="PR00332">
    <property type="entry name" value="HISTRIAD"/>
</dbReference>
<dbReference type="SUPFAM" id="SSF54197">
    <property type="entry name" value="HIT-like"/>
    <property type="match status" value="1"/>
</dbReference>
<dbReference type="PROSITE" id="PS00892">
    <property type="entry name" value="HIT_1"/>
    <property type="match status" value="1"/>
</dbReference>
<dbReference type="PROSITE" id="PS51084">
    <property type="entry name" value="HIT_2"/>
    <property type="match status" value="1"/>
</dbReference>
<proteinExistence type="evidence at protein level"/>
<sequence length="127" mass="14055">MSESVGNIRIDPRDTIFAKIISGAIPSKKFYDDEYCIAIEDINPQAPVHLLVIPKLAVGGLSDVANVDLEKYKESMGHIMSKIHHIASLKGADSYRLVINEGVLGQQSVRWLHIHILGGRQMNWPPG</sequence>
<reference key="1">
    <citation type="journal article" date="2000" name="Plant Cell Physiol.">
        <title>Analysis of a mod B mutant in Dictyostelium discoideum using mRNA differential display.</title>
        <authorList>
            <person name="Yoshida M."/>
            <person name="Sendai Y."/>
            <person name="Sakuragi N."/>
            <person name="Hotta Y."/>
        </authorList>
    </citation>
    <scope>NUCLEOTIDE SEQUENCE [MRNA]</scope>
    <source>
        <strain>AX2</strain>
    </source>
</reference>
<reference key="2">
    <citation type="journal article" date="1996" name="Proc. Natl. Acad. Sci. U.S.A.">
        <title>Ordered yeast artificial chromosome clones representing the Dictyostelium discoideum genome.</title>
        <authorList>
            <person name="Kuspa A."/>
            <person name="Loomis W.F."/>
        </authorList>
    </citation>
    <scope>NUCLEOTIDE SEQUENCE [LARGE SCALE MRNA]</scope>
    <source>
        <strain>AX4</strain>
    </source>
</reference>
<reference key="3">
    <citation type="journal article" date="2005" name="Nature">
        <title>The genome of the social amoeba Dictyostelium discoideum.</title>
        <authorList>
            <person name="Eichinger L."/>
            <person name="Pachebat J.A."/>
            <person name="Gloeckner G."/>
            <person name="Rajandream M.A."/>
            <person name="Sucgang R."/>
            <person name="Berriman M."/>
            <person name="Song J."/>
            <person name="Olsen R."/>
            <person name="Szafranski K."/>
            <person name="Xu Q."/>
            <person name="Tunggal B."/>
            <person name="Kummerfeld S."/>
            <person name="Madera M."/>
            <person name="Konfortov B.A."/>
            <person name="Rivero F."/>
            <person name="Bankier A.T."/>
            <person name="Lehmann R."/>
            <person name="Hamlin N."/>
            <person name="Davies R."/>
            <person name="Gaudet P."/>
            <person name="Fey P."/>
            <person name="Pilcher K."/>
            <person name="Chen G."/>
            <person name="Saunders D."/>
            <person name="Sodergren E.J."/>
            <person name="Davis P."/>
            <person name="Kerhornou A."/>
            <person name="Nie X."/>
            <person name="Hall N."/>
            <person name="Anjard C."/>
            <person name="Hemphill L."/>
            <person name="Bason N."/>
            <person name="Farbrother P."/>
            <person name="Desany B."/>
            <person name="Just E."/>
            <person name="Morio T."/>
            <person name="Rost R."/>
            <person name="Churcher C.M."/>
            <person name="Cooper J."/>
            <person name="Haydock S."/>
            <person name="van Driessche N."/>
            <person name="Cronin A."/>
            <person name="Goodhead I."/>
            <person name="Muzny D.M."/>
            <person name="Mourier T."/>
            <person name="Pain A."/>
            <person name="Lu M."/>
            <person name="Harper D."/>
            <person name="Lindsay R."/>
            <person name="Hauser H."/>
            <person name="James K.D."/>
            <person name="Quiles M."/>
            <person name="Madan Babu M."/>
            <person name="Saito T."/>
            <person name="Buchrieser C."/>
            <person name="Wardroper A."/>
            <person name="Felder M."/>
            <person name="Thangavelu M."/>
            <person name="Johnson D."/>
            <person name="Knights A."/>
            <person name="Loulseged H."/>
            <person name="Mungall K.L."/>
            <person name="Oliver K."/>
            <person name="Price C."/>
            <person name="Quail M.A."/>
            <person name="Urushihara H."/>
            <person name="Hernandez J."/>
            <person name="Rabbinowitsch E."/>
            <person name="Steffen D."/>
            <person name="Sanders M."/>
            <person name="Ma J."/>
            <person name="Kohara Y."/>
            <person name="Sharp S."/>
            <person name="Simmonds M.N."/>
            <person name="Spiegler S."/>
            <person name="Tivey A."/>
            <person name="Sugano S."/>
            <person name="White B."/>
            <person name="Walker D."/>
            <person name="Woodward J.R."/>
            <person name="Winckler T."/>
            <person name="Tanaka Y."/>
            <person name="Shaulsky G."/>
            <person name="Schleicher M."/>
            <person name="Weinstock G.M."/>
            <person name="Rosenthal A."/>
            <person name="Cox E.C."/>
            <person name="Chisholm R.L."/>
            <person name="Gibbs R.A."/>
            <person name="Loomis W.F."/>
            <person name="Platzer M."/>
            <person name="Kay R.R."/>
            <person name="Williams J.G."/>
            <person name="Dear P.H."/>
            <person name="Noegel A.A."/>
            <person name="Barrell B.G."/>
            <person name="Kuspa A."/>
        </authorList>
    </citation>
    <scope>NUCLEOTIDE SEQUENCE [LARGE SCALE GENOMIC DNA]</scope>
    <source>
        <strain>AX4</strain>
    </source>
</reference>
<reference key="4">
    <citation type="journal article" date="2006" name="J. Proteome Res.">
        <title>Identification of novel centrosomal proteins in Dictyostelium discoideum by comparative proteomic approaches.</title>
        <authorList>
            <person name="Reinders Y."/>
            <person name="Schulz I."/>
            <person name="Graef R."/>
            <person name="Sickmann A."/>
        </authorList>
    </citation>
    <scope>IDENTIFICATION BY MASS SPECTROMETRY [LARGE SCALE ANALYSIS]</scope>
</reference>
<reference key="5">
    <citation type="journal article" date="2006" name="Mol. Cell. Proteomics">
        <title>Proteomics fingerprinting of phagosome maturation and evidence for the role of a Galpha during uptake.</title>
        <authorList>
            <person name="Gotthardt D."/>
            <person name="Blancheteau V."/>
            <person name="Bosserhoff A."/>
            <person name="Ruppert T."/>
            <person name="Delorenzi M."/>
            <person name="Soldati T."/>
        </authorList>
    </citation>
    <scope>IDENTIFICATION BY MASS SPECTROMETRY [LARGE SCALE ANALYSIS]</scope>
    <source>
        <strain>AX2</strain>
    </source>
</reference>
<gene>
    <name type="primary">pkiA</name>
    <name type="ORF">DDB_G0289391</name>
</gene>
<evidence type="ECO:0000255" key="1">
    <source>
        <dbReference type="PROSITE-ProRule" id="PRU00464"/>
    </source>
</evidence>
<evidence type="ECO:0000305" key="2"/>
<name>PKIA_DICDI</name>
<protein>
    <recommendedName>
        <fullName>Protein pkiA</fullName>
    </recommendedName>
    <alternativeName>
        <fullName>Protein DD-1</fullName>
    </alternativeName>
</protein>